<accession>Q6G009</accession>
<sequence>MTKQENDIQKRFFNDNLQTVDVAIFDAINGEFKRQQHEIELIASENIVSRAVLEAQGSILTNKYAEGYPRKRFYGGCRFVDVVEDLAIERAKQLFGAAFANVQAHSGSQMNQAVFLALLQPGDTFMGLDLNSGGHLTHGSSVNMSGKWFDVVSYGVRKEDQILDMEEIERLAKEHKPKLIITGGSAYSRLWDWKRFREIADEIGAYLLVDMSHIAGLVAGGVHPSPVPHAHIVTTTTHKSLRGPRGGLILTNDETLARKINSAIFPGLQGGPLMHVIAAKAVAFEEALQPAFKNYSANVVVNAKTLAKTLQSNGFDIVSGGTDNHLLLVDLCSKKVTGKRAELALGRAHITCNKNAIPFDLQAPSVTSGIRLGSPAATTRGLAENEFVQVGHMISEVLDGLQMAKSDEDNNAVEMAVRKKVEDMTNKFPLYSYLPIC</sequence>
<feature type="chain" id="PRO_0000113535" description="Serine hydroxymethyltransferase">
    <location>
        <begin position="1"/>
        <end position="437"/>
    </location>
</feature>
<feature type="binding site" evidence="1">
    <location>
        <position position="130"/>
    </location>
    <ligand>
        <name>(6S)-5,6,7,8-tetrahydrofolate</name>
        <dbReference type="ChEBI" id="CHEBI:57453"/>
    </ligand>
</feature>
<feature type="binding site" evidence="1">
    <location>
        <begin position="134"/>
        <end position="136"/>
    </location>
    <ligand>
        <name>(6S)-5,6,7,8-tetrahydrofolate</name>
        <dbReference type="ChEBI" id="CHEBI:57453"/>
    </ligand>
</feature>
<feature type="site" description="Plays an important role in substrate specificity" evidence="1">
    <location>
        <position position="238"/>
    </location>
</feature>
<feature type="modified residue" description="N6-(pyridoxal phosphate)lysine" evidence="1">
    <location>
        <position position="239"/>
    </location>
</feature>
<gene>
    <name evidence="1" type="primary">glyA</name>
    <name type="ordered locus">BQ05390</name>
</gene>
<name>GLYA_BARQU</name>
<comment type="function">
    <text evidence="1">Catalyzes the reversible interconversion of serine and glycine with tetrahydrofolate (THF) serving as the one-carbon carrier. This reaction serves as the major source of one-carbon groups required for the biosynthesis of purines, thymidylate, methionine, and other important biomolecules. Also exhibits THF-independent aldolase activity toward beta-hydroxyamino acids, producing glycine and aldehydes, via a retro-aldol mechanism.</text>
</comment>
<comment type="catalytic activity">
    <reaction evidence="1">
        <text>(6R)-5,10-methylene-5,6,7,8-tetrahydrofolate + glycine + H2O = (6S)-5,6,7,8-tetrahydrofolate + L-serine</text>
        <dbReference type="Rhea" id="RHEA:15481"/>
        <dbReference type="ChEBI" id="CHEBI:15377"/>
        <dbReference type="ChEBI" id="CHEBI:15636"/>
        <dbReference type="ChEBI" id="CHEBI:33384"/>
        <dbReference type="ChEBI" id="CHEBI:57305"/>
        <dbReference type="ChEBI" id="CHEBI:57453"/>
        <dbReference type="EC" id="2.1.2.1"/>
    </reaction>
</comment>
<comment type="cofactor">
    <cofactor evidence="1">
        <name>pyridoxal 5'-phosphate</name>
        <dbReference type="ChEBI" id="CHEBI:597326"/>
    </cofactor>
</comment>
<comment type="pathway">
    <text evidence="1">One-carbon metabolism; tetrahydrofolate interconversion.</text>
</comment>
<comment type="pathway">
    <text evidence="1">Amino-acid biosynthesis; glycine biosynthesis; glycine from L-serine: step 1/1.</text>
</comment>
<comment type="subunit">
    <text evidence="1">Homodimer.</text>
</comment>
<comment type="subcellular location">
    <subcellularLocation>
        <location evidence="1">Cytoplasm</location>
    </subcellularLocation>
</comment>
<comment type="similarity">
    <text evidence="1">Belongs to the SHMT family.</text>
</comment>
<organism>
    <name type="scientific">Bartonella quintana (strain Toulouse)</name>
    <name type="common">Rochalimaea quintana</name>
    <dbReference type="NCBI Taxonomy" id="283165"/>
    <lineage>
        <taxon>Bacteria</taxon>
        <taxon>Pseudomonadati</taxon>
        <taxon>Pseudomonadota</taxon>
        <taxon>Alphaproteobacteria</taxon>
        <taxon>Hyphomicrobiales</taxon>
        <taxon>Bartonellaceae</taxon>
        <taxon>Bartonella</taxon>
    </lineage>
</organism>
<dbReference type="EC" id="2.1.2.1" evidence="1"/>
<dbReference type="EMBL" id="BX897700">
    <property type="protein sequence ID" value="CAF26034.1"/>
    <property type="molecule type" value="Genomic_DNA"/>
</dbReference>
<dbReference type="RefSeq" id="WP_011179308.1">
    <property type="nucleotide sequence ID" value="NC_005955.1"/>
</dbReference>
<dbReference type="SMR" id="Q6G009"/>
<dbReference type="KEGG" id="bqu:BQ05390"/>
<dbReference type="eggNOG" id="COG0112">
    <property type="taxonomic scope" value="Bacteria"/>
</dbReference>
<dbReference type="HOGENOM" id="CLU_022477_2_1_5"/>
<dbReference type="OrthoDB" id="9803846at2"/>
<dbReference type="UniPathway" id="UPA00193"/>
<dbReference type="UniPathway" id="UPA00288">
    <property type="reaction ID" value="UER01023"/>
</dbReference>
<dbReference type="Proteomes" id="UP000000597">
    <property type="component" value="Chromosome"/>
</dbReference>
<dbReference type="GO" id="GO:0005829">
    <property type="term" value="C:cytosol"/>
    <property type="evidence" value="ECO:0007669"/>
    <property type="project" value="TreeGrafter"/>
</dbReference>
<dbReference type="GO" id="GO:0004372">
    <property type="term" value="F:glycine hydroxymethyltransferase activity"/>
    <property type="evidence" value="ECO:0007669"/>
    <property type="project" value="UniProtKB-UniRule"/>
</dbReference>
<dbReference type="GO" id="GO:0030170">
    <property type="term" value="F:pyridoxal phosphate binding"/>
    <property type="evidence" value="ECO:0007669"/>
    <property type="project" value="UniProtKB-UniRule"/>
</dbReference>
<dbReference type="GO" id="GO:0019264">
    <property type="term" value="P:glycine biosynthetic process from serine"/>
    <property type="evidence" value="ECO:0007669"/>
    <property type="project" value="UniProtKB-UniRule"/>
</dbReference>
<dbReference type="GO" id="GO:0035999">
    <property type="term" value="P:tetrahydrofolate interconversion"/>
    <property type="evidence" value="ECO:0007669"/>
    <property type="project" value="UniProtKB-UniRule"/>
</dbReference>
<dbReference type="CDD" id="cd00378">
    <property type="entry name" value="SHMT"/>
    <property type="match status" value="1"/>
</dbReference>
<dbReference type="FunFam" id="3.40.640.10:FF:000001">
    <property type="entry name" value="Serine hydroxymethyltransferase"/>
    <property type="match status" value="1"/>
</dbReference>
<dbReference type="Gene3D" id="3.90.1150.10">
    <property type="entry name" value="Aspartate Aminotransferase, domain 1"/>
    <property type="match status" value="1"/>
</dbReference>
<dbReference type="Gene3D" id="3.40.640.10">
    <property type="entry name" value="Type I PLP-dependent aspartate aminotransferase-like (Major domain)"/>
    <property type="match status" value="1"/>
</dbReference>
<dbReference type="HAMAP" id="MF_00051">
    <property type="entry name" value="SHMT"/>
    <property type="match status" value="1"/>
</dbReference>
<dbReference type="InterPro" id="IPR015424">
    <property type="entry name" value="PyrdxlP-dep_Trfase"/>
</dbReference>
<dbReference type="InterPro" id="IPR015421">
    <property type="entry name" value="PyrdxlP-dep_Trfase_major"/>
</dbReference>
<dbReference type="InterPro" id="IPR015422">
    <property type="entry name" value="PyrdxlP-dep_Trfase_small"/>
</dbReference>
<dbReference type="InterPro" id="IPR001085">
    <property type="entry name" value="Ser_HO-MeTrfase"/>
</dbReference>
<dbReference type="InterPro" id="IPR049943">
    <property type="entry name" value="Ser_HO-MeTrfase-like"/>
</dbReference>
<dbReference type="InterPro" id="IPR019798">
    <property type="entry name" value="Ser_HO-MeTrfase_PLP_BS"/>
</dbReference>
<dbReference type="InterPro" id="IPR039429">
    <property type="entry name" value="SHMT-like_dom"/>
</dbReference>
<dbReference type="NCBIfam" id="NF000586">
    <property type="entry name" value="PRK00011.1"/>
    <property type="match status" value="1"/>
</dbReference>
<dbReference type="PANTHER" id="PTHR11680">
    <property type="entry name" value="SERINE HYDROXYMETHYLTRANSFERASE"/>
    <property type="match status" value="1"/>
</dbReference>
<dbReference type="PANTHER" id="PTHR11680:SF35">
    <property type="entry name" value="SERINE HYDROXYMETHYLTRANSFERASE 1"/>
    <property type="match status" value="1"/>
</dbReference>
<dbReference type="Pfam" id="PF00464">
    <property type="entry name" value="SHMT"/>
    <property type="match status" value="1"/>
</dbReference>
<dbReference type="PIRSF" id="PIRSF000412">
    <property type="entry name" value="SHMT"/>
    <property type="match status" value="1"/>
</dbReference>
<dbReference type="SUPFAM" id="SSF53383">
    <property type="entry name" value="PLP-dependent transferases"/>
    <property type="match status" value="1"/>
</dbReference>
<dbReference type="PROSITE" id="PS00096">
    <property type="entry name" value="SHMT"/>
    <property type="match status" value="1"/>
</dbReference>
<reference key="1">
    <citation type="journal article" date="2004" name="Proc. Natl. Acad. Sci. U.S.A.">
        <title>The louse-borne human pathogen Bartonella quintana is a genomic derivative of the zoonotic agent Bartonella henselae.</title>
        <authorList>
            <person name="Alsmark U.C.M."/>
            <person name="Frank A.C."/>
            <person name="Karlberg E.O."/>
            <person name="Legault B.-A."/>
            <person name="Ardell D.H."/>
            <person name="Canbaeck B."/>
            <person name="Eriksson A.-S."/>
            <person name="Naeslund A.K."/>
            <person name="Handley S.A."/>
            <person name="Huvet M."/>
            <person name="La Scola B."/>
            <person name="Holmberg M."/>
            <person name="Andersson S.G.E."/>
        </authorList>
    </citation>
    <scope>NUCLEOTIDE SEQUENCE [LARGE SCALE GENOMIC DNA]</scope>
    <source>
        <strain>Toulouse</strain>
    </source>
</reference>
<protein>
    <recommendedName>
        <fullName evidence="1">Serine hydroxymethyltransferase</fullName>
        <shortName evidence="1">SHMT</shortName>
        <shortName evidence="1">Serine methylase</shortName>
        <ecNumber evidence="1">2.1.2.1</ecNumber>
    </recommendedName>
</protein>
<evidence type="ECO:0000255" key="1">
    <source>
        <dbReference type="HAMAP-Rule" id="MF_00051"/>
    </source>
</evidence>
<keyword id="KW-0028">Amino-acid biosynthesis</keyword>
<keyword id="KW-0963">Cytoplasm</keyword>
<keyword id="KW-0554">One-carbon metabolism</keyword>
<keyword id="KW-0663">Pyridoxal phosphate</keyword>
<keyword id="KW-0808">Transferase</keyword>
<proteinExistence type="inferred from homology"/>